<evidence type="ECO:0000256" key="1">
    <source>
        <dbReference type="SAM" id="MobiDB-lite"/>
    </source>
</evidence>
<evidence type="ECO:0000305" key="2"/>
<protein>
    <recommendedName>
        <fullName>Agglutinin beta-3 chain</fullName>
    </recommendedName>
    <alternativeName>
        <fullName>MPA</fullName>
    </alternativeName>
</protein>
<comment type="function">
    <text>D-galactose-specific lectin, binds the T-antigen structure Gal-beta1,3-GalNAc.</text>
</comment>
<comment type="subunit">
    <text>Formed of four alpha chains and four beta chains.</text>
</comment>
<comment type="similarity">
    <text evidence="2">Belongs to the jacalin lectin family.</text>
</comment>
<organism>
    <name type="scientific">Maclura pomifera</name>
    <name type="common">Osage orange</name>
    <name type="synonym">Ioxylon pomiferum</name>
    <dbReference type="NCBI Taxonomy" id="3496"/>
    <lineage>
        <taxon>Eukaryota</taxon>
        <taxon>Viridiplantae</taxon>
        <taxon>Streptophyta</taxon>
        <taxon>Embryophyta</taxon>
        <taxon>Tracheophyta</taxon>
        <taxon>Spermatophyta</taxon>
        <taxon>Magnoliopsida</taxon>
        <taxon>eudicotyledons</taxon>
        <taxon>Gunneridae</taxon>
        <taxon>Pentapetalae</taxon>
        <taxon>rosids</taxon>
        <taxon>fabids</taxon>
        <taxon>Rosales</taxon>
        <taxon>Moraceae</taxon>
        <taxon>Chlorophoreae</taxon>
        <taxon>Maclura</taxon>
    </lineage>
</organism>
<reference key="1">
    <citation type="journal article" date="1989" name="Arch. Biochem. Biophys.">
        <title>Homology of the D-galactose-specific lectins from Artocarpus integrifolia and Maclura pomifera and the role of an unusual small polypeptide subunit.</title>
        <authorList>
            <person name="Young N.M."/>
            <person name="Johnston R.A.Z."/>
            <person name="Szabo A.G."/>
            <person name="Watson D.C."/>
        </authorList>
    </citation>
    <scope>PROTEIN SEQUENCE</scope>
    <source>
        <tissue>Seed</tissue>
    </source>
</reference>
<accession>P18677</accession>
<dbReference type="GO" id="GO:0030246">
    <property type="term" value="F:carbohydrate binding"/>
    <property type="evidence" value="ECO:0007669"/>
    <property type="project" value="UniProtKB-KW"/>
</dbReference>
<name>LECB3_MACPO</name>
<feature type="peptide" id="PRO_0000044037" description="Agglutinin beta-3 chain">
    <location>
        <begin position="1"/>
        <end position="20"/>
    </location>
</feature>
<feature type="region of interest" description="Disordered" evidence="1">
    <location>
        <begin position="1"/>
        <end position="20"/>
    </location>
</feature>
<keyword id="KW-0903">Direct protein sequencing</keyword>
<keyword id="KW-0430">Lectin</keyword>
<sequence>GPNGKSQSIIVGPWGDRVTN</sequence>
<proteinExistence type="evidence at protein level"/>